<reference key="1">
    <citation type="journal article" date="2001" name="Nature">
        <title>Genome sequence of enterohaemorrhagic Escherichia coli O157:H7.</title>
        <authorList>
            <person name="Perna N.T."/>
            <person name="Plunkett G. III"/>
            <person name="Burland V."/>
            <person name="Mau B."/>
            <person name="Glasner J.D."/>
            <person name="Rose D.J."/>
            <person name="Mayhew G.F."/>
            <person name="Evans P.S."/>
            <person name="Gregor J."/>
            <person name="Kirkpatrick H.A."/>
            <person name="Posfai G."/>
            <person name="Hackett J."/>
            <person name="Klink S."/>
            <person name="Boutin A."/>
            <person name="Shao Y."/>
            <person name="Miller L."/>
            <person name="Grotbeck E.J."/>
            <person name="Davis N.W."/>
            <person name="Lim A."/>
            <person name="Dimalanta E.T."/>
            <person name="Potamousis K."/>
            <person name="Apodaca J."/>
            <person name="Anantharaman T.S."/>
            <person name="Lin J."/>
            <person name="Yen G."/>
            <person name="Schwartz D.C."/>
            <person name="Welch R.A."/>
            <person name="Blattner F.R."/>
        </authorList>
    </citation>
    <scope>NUCLEOTIDE SEQUENCE [LARGE SCALE GENOMIC DNA]</scope>
    <source>
        <strain>O157:H7 / EDL933 / ATCC 700927 / EHEC</strain>
    </source>
</reference>
<reference key="2">
    <citation type="journal article" date="2001" name="DNA Res.">
        <title>Complete genome sequence of enterohemorrhagic Escherichia coli O157:H7 and genomic comparison with a laboratory strain K-12.</title>
        <authorList>
            <person name="Hayashi T."/>
            <person name="Makino K."/>
            <person name="Ohnishi M."/>
            <person name="Kurokawa K."/>
            <person name="Ishii K."/>
            <person name="Yokoyama K."/>
            <person name="Han C.-G."/>
            <person name="Ohtsubo E."/>
            <person name="Nakayama K."/>
            <person name="Murata T."/>
            <person name="Tanaka M."/>
            <person name="Tobe T."/>
            <person name="Iida T."/>
            <person name="Takami H."/>
            <person name="Honda T."/>
            <person name="Sasakawa C."/>
            <person name="Ogasawara N."/>
            <person name="Yasunaga T."/>
            <person name="Kuhara S."/>
            <person name="Shiba T."/>
            <person name="Hattori M."/>
            <person name="Shinagawa H."/>
        </authorList>
    </citation>
    <scope>NUCLEOTIDE SEQUENCE [LARGE SCALE GENOMIC DNA]</scope>
    <source>
        <strain>O157:H7 / Sakai / RIMD 0509952 / EHEC</strain>
    </source>
</reference>
<proteinExistence type="inferred from homology"/>
<protein>
    <recommendedName>
        <fullName evidence="1">Quinate/shikimate dehydrogenase</fullName>
        <ecNumber evidence="1">1.1.1.282</ecNumber>
    </recommendedName>
    <alternativeName>
        <fullName evidence="1">NAD-dependent shikimate 5-dehydrogenase</fullName>
    </alternativeName>
</protein>
<comment type="function">
    <text evidence="1">The actual biological function of YdiB remains unclear, nor is it known whether 3-dehydroshikimate or quinate represents the natural substrate. Catalyzes the reversible NAD-dependent reduction of both 3-dehydroshikimate (DHSA) and 3-dehydroquinate to yield shikimate (SA) and quinate, respectively. It can use both NAD or NADP for catalysis, however it has higher catalytic efficiency with NAD.</text>
</comment>
<comment type="catalytic activity">
    <reaction evidence="1">
        <text>L-quinate + NAD(+) = 3-dehydroquinate + NADH + H(+)</text>
        <dbReference type="Rhea" id="RHEA:22364"/>
        <dbReference type="ChEBI" id="CHEBI:15378"/>
        <dbReference type="ChEBI" id="CHEBI:29751"/>
        <dbReference type="ChEBI" id="CHEBI:32364"/>
        <dbReference type="ChEBI" id="CHEBI:57540"/>
        <dbReference type="ChEBI" id="CHEBI:57945"/>
        <dbReference type="EC" id="1.1.1.282"/>
    </reaction>
</comment>
<comment type="catalytic activity">
    <reaction evidence="1">
        <text>L-quinate + NADP(+) = 3-dehydroquinate + NADPH + H(+)</text>
        <dbReference type="Rhea" id="RHEA:18425"/>
        <dbReference type="ChEBI" id="CHEBI:15378"/>
        <dbReference type="ChEBI" id="CHEBI:29751"/>
        <dbReference type="ChEBI" id="CHEBI:32364"/>
        <dbReference type="ChEBI" id="CHEBI:57783"/>
        <dbReference type="ChEBI" id="CHEBI:58349"/>
        <dbReference type="EC" id="1.1.1.282"/>
    </reaction>
</comment>
<comment type="catalytic activity">
    <reaction evidence="1">
        <text>shikimate + NADP(+) = 3-dehydroshikimate + NADPH + H(+)</text>
        <dbReference type="Rhea" id="RHEA:17737"/>
        <dbReference type="ChEBI" id="CHEBI:15378"/>
        <dbReference type="ChEBI" id="CHEBI:16630"/>
        <dbReference type="ChEBI" id="CHEBI:36208"/>
        <dbReference type="ChEBI" id="CHEBI:57783"/>
        <dbReference type="ChEBI" id="CHEBI:58349"/>
        <dbReference type="EC" id="1.1.1.282"/>
    </reaction>
</comment>
<comment type="catalytic activity">
    <reaction evidence="1">
        <text>shikimate + NAD(+) = 3-dehydroshikimate + NADH + H(+)</text>
        <dbReference type="Rhea" id="RHEA:17741"/>
        <dbReference type="ChEBI" id="CHEBI:15378"/>
        <dbReference type="ChEBI" id="CHEBI:16630"/>
        <dbReference type="ChEBI" id="CHEBI:36208"/>
        <dbReference type="ChEBI" id="CHEBI:57540"/>
        <dbReference type="ChEBI" id="CHEBI:57945"/>
        <dbReference type="EC" id="1.1.1.282"/>
    </reaction>
</comment>
<comment type="pathway">
    <text evidence="1">Metabolic intermediate biosynthesis; chorismate biosynthesis; chorismate from D-erythrose 4-phosphate and phosphoenolpyruvate: step 4/7.</text>
</comment>
<comment type="subunit">
    <text evidence="1">Homodimer.</text>
</comment>
<comment type="similarity">
    <text evidence="1">Belongs to the shikimate dehydrogenase family.</text>
</comment>
<evidence type="ECO:0000255" key="1">
    <source>
        <dbReference type="HAMAP-Rule" id="MF_01578"/>
    </source>
</evidence>
<organism>
    <name type="scientific">Escherichia coli O157:H7</name>
    <dbReference type="NCBI Taxonomy" id="83334"/>
    <lineage>
        <taxon>Bacteria</taxon>
        <taxon>Pseudomonadati</taxon>
        <taxon>Pseudomonadota</taxon>
        <taxon>Gammaproteobacteria</taxon>
        <taxon>Enterobacterales</taxon>
        <taxon>Enterobacteriaceae</taxon>
        <taxon>Escherichia</taxon>
    </lineage>
</organism>
<name>YDIB_ECO57</name>
<dbReference type="EC" id="1.1.1.282" evidence="1"/>
<dbReference type="EMBL" id="AE005174">
    <property type="protein sequence ID" value="AAG56679.1"/>
    <property type="molecule type" value="Genomic_DNA"/>
</dbReference>
<dbReference type="EMBL" id="BA000007">
    <property type="protein sequence ID" value="BAB35822.1"/>
    <property type="molecule type" value="Genomic_DNA"/>
</dbReference>
<dbReference type="PIR" id="C85777">
    <property type="entry name" value="C85777"/>
</dbReference>
<dbReference type="PIR" id="G90928">
    <property type="entry name" value="G90928"/>
</dbReference>
<dbReference type="RefSeq" id="NP_310426.1">
    <property type="nucleotide sequence ID" value="NC_002695.1"/>
</dbReference>
<dbReference type="RefSeq" id="WP_000383479.1">
    <property type="nucleotide sequence ID" value="NZ_VOAI01000007.1"/>
</dbReference>
<dbReference type="SMR" id="Q8X5Y4"/>
<dbReference type="STRING" id="155864.Z2720"/>
<dbReference type="GeneID" id="912660"/>
<dbReference type="KEGG" id="ece:Z2720"/>
<dbReference type="KEGG" id="ecs:ECs_2399"/>
<dbReference type="PATRIC" id="fig|386585.9.peg.2512"/>
<dbReference type="eggNOG" id="COG0169">
    <property type="taxonomic scope" value="Bacteria"/>
</dbReference>
<dbReference type="HOGENOM" id="CLU_044063_4_4_6"/>
<dbReference type="OMA" id="AIYVMRR"/>
<dbReference type="UniPathway" id="UPA00053">
    <property type="reaction ID" value="UER00087"/>
</dbReference>
<dbReference type="Proteomes" id="UP000000558">
    <property type="component" value="Chromosome"/>
</dbReference>
<dbReference type="Proteomes" id="UP000002519">
    <property type="component" value="Chromosome"/>
</dbReference>
<dbReference type="GO" id="GO:0030266">
    <property type="term" value="F:quinate 3-dehydrogenase (NAD+) activity"/>
    <property type="evidence" value="ECO:0007669"/>
    <property type="project" value="UniProtKB-UniRule"/>
</dbReference>
<dbReference type="GO" id="GO:0052733">
    <property type="term" value="F:quinate 3-dehydrogenase (NADP+) activity"/>
    <property type="evidence" value="ECO:0007669"/>
    <property type="project" value="InterPro"/>
</dbReference>
<dbReference type="GO" id="GO:0052734">
    <property type="term" value="F:shikimate 3-dehydrogenase (NAD+) activity"/>
    <property type="evidence" value="ECO:0007669"/>
    <property type="project" value="InterPro"/>
</dbReference>
<dbReference type="GO" id="GO:0004764">
    <property type="term" value="F:shikimate 3-dehydrogenase (NADP+) activity"/>
    <property type="evidence" value="ECO:0007669"/>
    <property type="project" value="UniProtKB-UniRule"/>
</dbReference>
<dbReference type="GO" id="GO:0008652">
    <property type="term" value="P:amino acid biosynthetic process"/>
    <property type="evidence" value="ECO:0007669"/>
    <property type="project" value="UniProtKB-KW"/>
</dbReference>
<dbReference type="GO" id="GO:0009073">
    <property type="term" value="P:aromatic amino acid family biosynthetic process"/>
    <property type="evidence" value="ECO:0007669"/>
    <property type="project" value="UniProtKB-KW"/>
</dbReference>
<dbReference type="GO" id="GO:0009423">
    <property type="term" value="P:chorismate biosynthetic process"/>
    <property type="evidence" value="ECO:0007669"/>
    <property type="project" value="UniProtKB-UniRule"/>
</dbReference>
<dbReference type="GO" id="GO:0019632">
    <property type="term" value="P:shikimate metabolic process"/>
    <property type="evidence" value="ECO:0007669"/>
    <property type="project" value="TreeGrafter"/>
</dbReference>
<dbReference type="CDD" id="cd01065">
    <property type="entry name" value="NAD_bind_Shikimate_DH"/>
    <property type="match status" value="1"/>
</dbReference>
<dbReference type="FunFam" id="3.40.50.10860:FF:000004">
    <property type="entry name" value="Quinate/shikimate dehydrogenase"/>
    <property type="match status" value="1"/>
</dbReference>
<dbReference type="FunFam" id="3.40.50.720:FF:000086">
    <property type="entry name" value="Quinate/shikimate dehydrogenase"/>
    <property type="match status" value="1"/>
</dbReference>
<dbReference type="Gene3D" id="3.40.50.10860">
    <property type="entry name" value="Leucine Dehydrogenase, chain A, domain 1"/>
    <property type="match status" value="1"/>
</dbReference>
<dbReference type="Gene3D" id="3.40.50.720">
    <property type="entry name" value="NAD(P)-binding Rossmann-like Domain"/>
    <property type="match status" value="1"/>
</dbReference>
<dbReference type="HAMAP" id="MF_00222">
    <property type="entry name" value="Shikimate_DH_AroE"/>
    <property type="match status" value="1"/>
</dbReference>
<dbReference type="HAMAP" id="MF_01578">
    <property type="entry name" value="Shikimate_DH_YdiB"/>
    <property type="match status" value="1"/>
</dbReference>
<dbReference type="InterPro" id="IPR046346">
    <property type="entry name" value="Aminoacid_DH-like_N_sf"/>
</dbReference>
<dbReference type="InterPro" id="IPR036291">
    <property type="entry name" value="NAD(P)-bd_dom_sf"/>
</dbReference>
<dbReference type="InterPro" id="IPR022872">
    <property type="entry name" value="Quinate/Shikimate_DH"/>
</dbReference>
<dbReference type="InterPro" id="IPR041121">
    <property type="entry name" value="SDH_C"/>
</dbReference>
<dbReference type="InterPro" id="IPR013708">
    <property type="entry name" value="Shikimate_DH-bd_N"/>
</dbReference>
<dbReference type="InterPro" id="IPR022893">
    <property type="entry name" value="Shikimate_DH_fam"/>
</dbReference>
<dbReference type="NCBIfam" id="NF009390">
    <property type="entry name" value="PRK12749.1"/>
    <property type="match status" value="1"/>
</dbReference>
<dbReference type="PANTHER" id="PTHR21089:SF1">
    <property type="entry name" value="BIFUNCTIONAL 3-DEHYDROQUINATE DEHYDRATASE_SHIKIMATE DEHYDROGENASE, CHLOROPLASTIC"/>
    <property type="match status" value="1"/>
</dbReference>
<dbReference type="PANTHER" id="PTHR21089">
    <property type="entry name" value="SHIKIMATE DEHYDROGENASE"/>
    <property type="match status" value="1"/>
</dbReference>
<dbReference type="Pfam" id="PF18317">
    <property type="entry name" value="SDH_C"/>
    <property type="match status" value="1"/>
</dbReference>
<dbReference type="Pfam" id="PF08501">
    <property type="entry name" value="Shikimate_dh_N"/>
    <property type="match status" value="1"/>
</dbReference>
<dbReference type="SUPFAM" id="SSF53223">
    <property type="entry name" value="Aminoacid dehydrogenase-like, N-terminal domain"/>
    <property type="match status" value="1"/>
</dbReference>
<dbReference type="SUPFAM" id="SSF51735">
    <property type="entry name" value="NAD(P)-binding Rossmann-fold domains"/>
    <property type="match status" value="1"/>
</dbReference>
<feature type="chain" id="PRO_0000136070" description="Quinate/shikimate dehydrogenase">
    <location>
        <begin position="1"/>
        <end position="288"/>
    </location>
</feature>
<feature type="binding site" evidence="1">
    <location>
        <position position="71"/>
    </location>
    <ligand>
        <name>substrate</name>
    </ligand>
</feature>
<feature type="binding site" evidence="1">
    <location>
        <position position="107"/>
    </location>
    <ligand>
        <name>substrate</name>
    </ligand>
</feature>
<feature type="binding site" evidence="1">
    <location>
        <begin position="132"/>
        <end position="135"/>
    </location>
    <ligand>
        <name>NAD(+)</name>
        <dbReference type="ChEBI" id="CHEBI:57540"/>
    </ligand>
</feature>
<feature type="binding site" evidence="1">
    <location>
        <begin position="155"/>
        <end position="158"/>
    </location>
    <ligand>
        <name>NAD(+)</name>
        <dbReference type="ChEBI" id="CHEBI:57540"/>
    </ligand>
</feature>
<feature type="binding site" evidence="1">
    <location>
        <position position="205"/>
    </location>
    <ligand>
        <name>NAD(+)</name>
        <dbReference type="ChEBI" id="CHEBI:57540"/>
    </ligand>
</feature>
<feature type="binding site" evidence="1">
    <location>
        <begin position="232"/>
        <end position="235"/>
    </location>
    <ligand>
        <name>NAD(+)</name>
        <dbReference type="ChEBI" id="CHEBI:57540"/>
    </ligand>
</feature>
<feature type="binding site" evidence="1">
    <location>
        <position position="255"/>
    </location>
    <ligand>
        <name>NAD(+)</name>
        <dbReference type="ChEBI" id="CHEBI:57540"/>
    </ligand>
</feature>
<accession>Q8X5Y4</accession>
<sequence length="288" mass="31226">MDVTAKYELIGLMAYPIRHSLSPEMQNKALEKAGLPFTYMAFEVDNDSFPGAIEGLKALKMRGTGVSMPNKQLACEYVDELTPAAKLVGAINTIVNDDGYLRGYNTDGTGHIRAIKESGFDIKGKTMVLLGAGGASTAIGAQGAIEGLKEIKLFNRRDKFFDKALAFAQRVNENTDCVVTVTDLADQQAFAEALASADILTNGTKVGMKPLENKSLVNDISLLHPGLLVTECVYNPHMTKLLQQAQQAGCKTIDGYGMLLWQGAEQFTLWTGKDFPLEYVKQVMGFGA</sequence>
<keyword id="KW-0028">Amino-acid biosynthesis</keyword>
<keyword id="KW-0057">Aromatic amino acid biosynthesis</keyword>
<keyword id="KW-0520">NAD</keyword>
<keyword id="KW-0521">NADP</keyword>
<keyword id="KW-0560">Oxidoreductase</keyword>
<keyword id="KW-1185">Reference proteome</keyword>
<gene>
    <name evidence="1" type="primary">ydiB</name>
    <name type="ordered locus">Z2720</name>
    <name type="ordered locus">ECs2399</name>
</gene>